<accession>Q9LTA3</accession>
<gene>
    <name type="primary">UGT91C1</name>
    <name type="ordered locus">At5g49690</name>
    <name type="ORF">K2I5.5</name>
</gene>
<protein>
    <recommendedName>
        <fullName>UDP-glycosyltransferase 91C1</fullName>
        <ecNumber>2.4.1.-</ecNumber>
    </recommendedName>
</protein>
<name>U91C1_ARATH</name>
<keyword id="KW-0328">Glycosyltransferase</keyword>
<keyword id="KW-1185">Reference proteome</keyword>
<keyword id="KW-0808">Transferase</keyword>
<sequence>MVDKREEVMHVAMFPWLAMGHLLPFLRLSKLLAQKGHKISFISTPRNIERLPKLQSNLASSITFVSFPLPPISGLPPSSESSMDVPYNKQQSLKAAFDLLQPPLKEFLRRSSPDWIIYDYASHWLPSIAAELGISKAFFSLFNAATLCFMGPSSSLIEEIRSTPEDFTVVPPWVPFKSNIVFRYHEVTRYVEKTEEDVTGVSDSVRFGYSIDESDAVFVRSCPEFEPEWFGLLKDLYRKPVFPIGFLPPVIEDDDAVDTTWVRIKKWLDKQRLNSVVYVSLGTEASLRHEEVTELALGLEKSETPFFWVLRNEPKIPDGFKTRVKGRGMVHVGWVPQVKILSHESVGGFLTHCGWNSVVEGLGFGKVPIFFPVLNEQGLNTRLLHGKGLGVEVSRDERDGSFDSDSVADSIRLVMIDDAGEEIRAKAKVMKDLFGNMDENIRYVDELVRFMRSKGSSSSS</sequence>
<reference key="1">
    <citation type="submission" date="2002-11" db="EMBL/GenBank/DDBJ databases">
        <title>Structural analysis of Arabidopsis thaliana chromosome 5. XI.</title>
        <authorList>
            <person name="Kaneko T."/>
            <person name="Katoh T."/>
            <person name="Asamizu E."/>
            <person name="Sato S."/>
            <person name="Nakamura Y."/>
            <person name="Kotani H."/>
            <person name="Tabata S."/>
        </authorList>
    </citation>
    <scope>NUCLEOTIDE SEQUENCE [LARGE SCALE GENOMIC DNA]</scope>
    <source>
        <strain>cv. Columbia</strain>
    </source>
</reference>
<reference key="2">
    <citation type="journal article" date="2017" name="Plant J.">
        <title>Araport11: a complete reannotation of the Arabidopsis thaliana reference genome.</title>
        <authorList>
            <person name="Cheng C.Y."/>
            <person name="Krishnakumar V."/>
            <person name="Chan A.P."/>
            <person name="Thibaud-Nissen F."/>
            <person name="Schobel S."/>
            <person name="Town C.D."/>
        </authorList>
    </citation>
    <scope>GENOME REANNOTATION</scope>
    <source>
        <strain>cv. Columbia</strain>
    </source>
</reference>
<reference key="3">
    <citation type="journal article" date="2002" name="Science">
        <title>Functional annotation of a full-length Arabidopsis cDNA collection.</title>
        <authorList>
            <person name="Seki M."/>
            <person name="Narusaka M."/>
            <person name="Kamiya A."/>
            <person name="Ishida J."/>
            <person name="Satou M."/>
            <person name="Sakurai T."/>
            <person name="Nakajima M."/>
            <person name="Enju A."/>
            <person name="Akiyama K."/>
            <person name="Oono Y."/>
            <person name="Muramatsu M."/>
            <person name="Hayashizaki Y."/>
            <person name="Kawai J."/>
            <person name="Carninci P."/>
            <person name="Itoh M."/>
            <person name="Ishii Y."/>
            <person name="Arakawa T."/>
            <person name="Shibata K."/>
            <person name="Shinagawa A."/>
            <person name="Shinozaki K."/>
        </authorList>
    </citation>
    <scope>NUCLEOTIDE SEQUENCE [LARGE SCALE MRNA]</scope>
    <source>
        <strain>cv. Columbia</strain>
    </source>
</reference>
<reference key="4">
    <citation type="journal article" date="2003" name="Science">
        <title>Empirical analysis of transcriptional activity in the Arabidopsis genome.</title>
        <authorList>
            <person name="Yamada K."/>
            <person name="Lim J."/>
            <person name="Dale J.M."/>
            <person name="Chen H."/>
            <person name="Shinn P."/>
            <person name="Palm C.J."/>
            <person name="Southwick A.M."/>
            <person name="Wu H.C."/>
            <person name="Kim C.J."/>
            <person name="Nguyen M."/>
            <person name="Pham P.K."/>
            <person name="Cheuk R.F."/>
            <person name="Karlin-Newmann G."/>
            <person name="Liu S.X."/>
            <person name="Lam B."/>
            <person name="Sakano H."/>
            <person name="Wu T."/>
            <person name="Yu G."/>
            <person name="Miranda M."/>
            <person name="Quach H.L."/>
            <person name="Tripp M."/>
            <person name="Chang C.H."/>
            <person name="Lee J.M."/>
            <person name="Toriumi M.J."/>
            <person name="Chan M.M."/>
            <person name="Tang C.C."/>
            <person name="Onodera C.S."/>
            <person name="Deng J.M."/>
            <person name="Akiyama K."/>
            <person name="Ansari Y."/>
            <person name="Arakawa T."/>
            <person name="Banh J."/>
            <person name="Banno F."/>
            <person name="Bowser L."/>
            <person name="Brooks S.Y."/>
            <person name="Carninci P."/>
            <person name="Chao Q."/>
            <person name="Choy N."/>
            <person name="Enju A."/>
            <person name="Goldsmith A.D."/>
            <person name="Gurjal M."/>
            <person name="Hansen N.F."/>
            <person name="Hayashizaki Y."/>
            <person name="Johnson-Hopson C."/>
            <person name="Hsuan V.W."/>
            <person name="Iida K."/>
            <person name="Karnes M."/>
            <person name="Khan S."/>
            <person name="Koesema E."/>
            <person name="Ishida J."/>
            <person name="Jiang P.X."/>
            <person name="Jones T."/>
            <person name="Kawai J."/>
            <person name="Kamiya A."/>
            <person name="Meyers C."/>
            <person name="Nakajima M."/>
            <person name="Narusaka M."/>
            <person name="Seki M."/>
            <person name="Sakurai T."/>
            <person name="Satou M."/>
            <person name="Tamse R."/>
            <person name="Vaysberg M."/>
            <person name="Wallender E.K."/>
            <person name="Wong C."/>
            <person name="Yamamura Y."/>
            <person name="Yuan S."/>
            <person name="Shinozaki K."/>
            <person name="Davis R.W."/>
            <person name="Theologis A."/>
            <person name="Ecker J.R."/>
        </authorList>
    </citation>
    <scope>NUCLEOTIDE SEQUENCE [LARGE SCALE MRNA]</scope>
    <source>
        <strain>cv. Columbia</strain>
    </source>
</reference>
<reference key="5">
    <citation type="journal article" date="2001" name="J. Biol. Chem.">
        <title>Phylogenetic analysis of the UDP-glycosyltransferase multigene family of Arabidopsis thaliana.</title>
        <authorList>
            <person name="Li Y."/>
            <person name="Baldauf S."/>
            <person name="Lim E.K."/>
            <person name="Bowles D.J."/>
        </authorList>
    </citation>
    <scope>GENE FAMILY</scope>
</reference>
<organism>
    <name type="scientific">Arabidopsis thaliana</name>
    <name type="common">Mouse-ear cress</name>
    <dbReference type="NCBI Taxonomy" id="3702"/>
    <lineage>
        <taxon>Eukaryota</taxon>
        <taxon>Viridiplantae</taxon>
        <taxon>Streptophyta</taxon>
        <taxon>Embryophyta</taxon>
        <taxon>Tracheophyta</taxon>
        <taxon>Spermatophyta</taxon>
        <taxon>Magnoliopsida</taxon>
        <taxon>eudicotyledons</taxon>
        <taxon>Gunneridae</taxon>
        <taxon>Pentapetalae</taxon>
        <taxon>rosids</taxon>
        <taxon>malvids</taxon>
        <taxon>Brassicales</taxon>
        <taxon>Brassicaceae</taxon>
        <taxon>Camelineae</taxon>
        <taxon>Arabidopsis</taxon>
    </lineage>
</organism>
<proteinExistence type="evidence at protein level"/>
<dbReference type="EC" id="2.4.1.-"/>
<dbReference type="EMBL" id="AB025613">
    <property type="protein sequence ID" value="BAA98157.1"/>
    <property type="molecule type" value="Genomic_DNA"/>
</dbReference>
<dbReference type="EMBL" id="CP002688">
    <property type="protein sequence ID" value="AED95845.1"/>
    <property type="molecule type" value="Genomic_DNA"/>
</dbReference>
<dbReference type="EMBL" id="AK117150">
    <property type="protein sequence ID" value="BAC41828.1"/>
    <property type="molecule type" value="mRNA"/>
</dbReference>
<dbReference type="EMBL" id="BT005390">
    <property type="protein sequence ID" value="AAO63454.1"/>
    <property type="molecule type" value="mRNA"/>
</dbReference>
<dbReference type="RefSeq" id="NP_199780.1">
    <property type="nucleotide sequence ID" value="NM_124347.3"/>
</dbReference>
<dbReference type="SMR" id="Q9LTA3"/>
<dbReference type="BioGRID" id="20278">
    <property type="interactions" value="2"/>
</dbReference>
<dbReference type="FunCoup" id="Q9LTA3">
    <property type="interactions" value="17"/>
</dbReference>
<dbReference type="IntAct" id="Q9LTA3">
    <property type="interactions" value="4"/>
</dbReference>
<dbReference type="STRING" id="3702.Q9LTA3"/>
<dbReference type="CAZy" id="GT1">
    <property type="family name" value="Glycosyltransferase Family 1"/>
</dbReference>
<dbReference type="PaxDb" id="3702-AT5G49690.1"/>
<dbReference type="ProteomicsDB" id="228519"/>
<dbReference type="EnsemblPlants" id="AT5G49690.1">
    <property type="protein sequence ID" value="AT5G49690.1"/>
    <property type="gene ID" value="AT5G49690"/>
</dbReference>
<dbReference type="GeneID" id="835032"/>
<dbReference type="Gramene" id="AT5G49690.1">
    <property type="protein sequence ID" value="AT5G49690.1"/>
    <property type="gene ID" value="AT5G49690"/>
</dbReference>
<dbReference type="KEGG" id="ath:AT5G49690"/>
<dbReference type="Araport" id="AT5G49690"/>
<dbReference type="TAIR" id="AT5G49690"/>
<dbReference type="eggNOG" id="KOG1192">
    <property type="taxonomic scope" value="Eukaryota"/>
</dbReference>
<dbReference type="HOGENOM" id="CLU_001724_2_3_1"/>
<dbReference type="InParanoid" id="Q9LTA3"/>
<dbReference type="OMA" id="VFRYHEV"/>
<dbReference type="OrthoDB" id="5835829at2759"/>
<dbReference type="PhylomeDB" id="Q9LTA3"/>
<dbReference type="BioCyc" id="ARA:AT5G49690-MONOMER"/>
<dbReference type="PRO" id="PR:Q9LTA3"/>
<dbReference type="Proteomes" id="UP000006548">
    <property type="component" value="Chromosome 5"/>
</dbReference>
<dbReference type="ExpressionAtlas" id="Q9LTA3">
    <property type="expression patterns" value="baseline and differential"/>
</dbReference>
<dbReference type="GO" id="GO:0035251">
    <property type="term" value="F:UDP-glucosyltransferase activity"/>
    <property type="evidence" value="ECO:0007669"/>
    <property type="project" value="InterPro"/>
</dbReference>
<dbReference type="GO" id="GO:0008194">
    <property type="term" value="F:UDP-glycosyltransferase activity"/>
    <property type="evidence" value="ECO:0000314"/>
    <property type="project" value="TAIR"/>
</dbReference>
<dbReference type="CDD" id="cd03784">
    <property type="entry name" value="GT1_Gtf-like"/>
    <property type="match status" value="1"/>
</dbReference>
<dbReference type="FunFam" id="3.40.50.2000:FF:000037">
    <property type="entry name" value="Glycosyltransferase"/>
    <property type="match status" value="1"/>
</dbReference>
<dbReference type="FunFam" id="3.40.50.2000:FF:000088">
    <property type="entry name" value="Glycosyltransferase"/>
    <property type="match status" value="1"/>
</dbReference>
<dbReference type="Gene3D" id="3.40.50.2000">
    <property type="entry name" value="Glycogen Phosphorylase B"/>
    <property type="match status" value="2"/>
</dbReference>
<dbReference type="InterPro" id="IPR050481">
    <property type="entry name" value="UDP-glycosyltransf_plant"/>
</dbReference>
<dbReference type="InterPro" id="IPR002213">
    <property type="entry name" value="UDP_glucos_trans"/>
</dbReference>
<dbReference type="PANTHER" id="PTHR48049">
    <property type="entry name" value="GLYCOSYLTRANSFERASE"/>
    <property type="match status" value="1"/>
</dbReference>
<dbReference type="PANTHER" id="PTHR48049:SF138">
    <property type="entry name" value="UDP-GLYCOSYLTRANSFERASE 91C1"/>
    <property type="match status" value="1"/>
</dbReference>
<dbReference type="Pfam" id="PF00201">
    <property type="entry name" value="UDPGT"/>
    <property type="match status" value="1"/>
</dbReference>
<dbReference type="SUPFAM" id="SSF53756">
    <property type="entry name" value="UDP-Glycosyltransferase/glycogen phosphorylase"/>
    <property type="match status" value="1"/>
</dbReference>
<comment type="interaction">
    <interactant intactId="EBI-4451280">
        <id>Q9LTA3</id>
    </interactant>
    <interactant intactId="EBI-25506855">
        <id>O23160</id>
        <label>MYB73</label>
    </interactant>
    <organismsDiffer>false</organismsDiffer>
    <experiments>3</experiments>
</comment>
<comment type="similarity">
    <text evidence="2">Belongs to the UDP-glycosyltransferase family.</text>
</comment>
<evidence type="ECO:0000250" key="1"/>
<evidence type="ECO:0000305" key="2"/>
<feature type="chain" id="PRO_0000409143" description="UDP-glycosyltransferase 91C1">
    <location>
        <begin position="1"/>
        <end position="460"/>
    </location>
</feature>
<feature type="binding site" evidence="1">
    <location>
        <position position="283"/>
    </location>
    <ligand>
        <name>UDP-alpha-D-glucose</name>
        <dbReference type="ChEBI" id="CHEBI:58885"/>
    </ligand>
</feature>
<feature type="binding site" evidence="1">
    <location>
        <begin position="335"/>
        <end position="337"/>
    </location>
    <ligand>
        <name>UDP-alpha-D-glucose</name>
        <dbReference type="ChEBI" id="CHEBI:58885"/>
    </ligand>
</feature>
<feature type="binding site" evidence="1">
    <location>
        <begin position="352"/>
        <end position="360"/>
    </location>
    <ligand>
        <name>UDP-alpha-D-glucose</name>
        <dbReference type="ChEBI" id="CHEBI:58885"/>
    </ligand>
</feature>
<feature type="binding site" evidence="1">
    <location>
        <begin position="374"/>
        <end position="377"/>
    </location>
    <ligand>
        <name>UDP-alpha-D-glucose</name>
        <dbReference type="ChEBI" id="CHEBI:58885"/>
    </ligand>
</feature>